<name>ASIC1_CAEEL</name>
<comment type="function">
    <text evidence="1 5">Forms voltage-independent, pH-gated trimeric sodium channels that act as postsynaptic excitatory receptors in the nervous system, playing a crucial role in regulating synaptic plasticity, learning, and memory (By similarity). Promotes synaptic vesicle fusion to positively regulate the release of dopamine at dopaminergic neuron synapses (PubMed:31494966). Displays high selectivity for sodium ions but can also permit the permeation of other cations (By similarity).</text>
</comment>
<comment type="catalytic activity">
    <reaction evidence="1">
        <text>Na(+)(in) = Na(+)(out)</text>
        <dbReference type="Rhea" id="RHEA:34963"/>
        <dbReference type="ChEBI" id="CHEBI:29101"/>
    </reaction>
</comment>
<comment type="catalytic activity">
    <reaction evidence="1">
        <text>K(+)(in) = K(+)(out)</text>
        <dbReference type="Rhea" id="RHEA:29463"/>
        <dbReference type="ChEBI" id="CHEBI:29103"/>
    </reaction>
</comment>
<comment type="catalytic activity">
    <reaction evidence="1">
        <text>Li(+)(in) = Li(+)(out)</text>
        <dbReference type="Rhea" id="RHEA:78551"/>
        <dbReference type="ChEBI" id="CHEBI:49713"/>
    </reaction>
</comment>
<comment type="catalytic activity">
    <reaction evidence="1">
        <text>Ca(2+)(in) = Ca(2+)(out)</text>
        <dbReference type="Rhea" id="RHEA:29671"/>
        <dbReference type="ChEBI" id="CHEBI:29108"/>
    </reaction>
</comment>
<comment type="subunit">
    <text evidence="1">Homotrimer. Heterotrimer; with other ASIC proteins producing channel with different properties.</text>
</comment>
<comment type="subcellular location">
    <subcellularLocation>
        <location evidence="2">Cell membrane</location>
        <topology evidence="2">Multi-pass membrane protein</topology>
    </subcellularLocation>
    <subcellularLocation>
        <location evidence="2">Postsynaptic cell membrane</location>
    </subcellularLocation>
    <subcellularLocation>
        <location evidence="3">Cell projection</location>
        <location evidence="3">Dendrite</location>
    </subcellularLocation>
</comment>
<comment type="domain">
    <text evidence="2">The second transmembrane domain (TM2) is a discontinuous alpha-helix disrupted by the GAS motif, which forms the selectivity filter by adopting an extended, belt-like conformation aligned approximately parallel to the membrane plane. This peptide belt encircles the waist of the channel and divides TM2 into two discontinuous helical segments. The distal helical segment of TM2 interacts with the cytoplasmic portion of the first transmembrane domain (TM1) from a neighboring subunit, contributing to the structural and functional integrity of the channel.</text>
</comment>
<comment type="similarity">
    <text evidence="6">Belongs to the amiloride-sensitive sodium channel (TC 1.A.6) family.</text>
</comment>
<proteinExistence type="inferred from homology"/>
<protein>
    <recommendedName>
        <fullName>Degenerin-like protein asic-1</fullName>
    </recommendedName>
    <alternativeName>
        <fullName>Acid-sensing/amiloride-sensitive ion channel protein 1</fullName>
    </alternativeName>
</protein>
<keyword id="KW-1003">Cell membrane</keyword>
<keyword id="KW-0966">Cell projection</keyword>
<keyword id="KW-1015">Disulfide bond</keyword>
<keyword id="KW-0325">Glycoprotein</keyword>
<keyword id="KW-0407">Ion channel</keyword>
<keyword id="KW-0406">Ion transport</keyword>
<keyword id="KW-0472">Membrane</keyword>
<keyword id="KW-0628">Postsynaptic cell membrane</keyword>
<keyword id="KW-1185">Reference proteome</keyword>
<keyword id="KW-0915">Sodium</keyword>
<keyword id="KW-0894">Sodium channel</keyword>
<keyword id="KW-0739">Sodium transport</keyword>
<keyword id="KW-0770">Synapse</keyword>
<keyword id="KW-0812">Transmembrane</keyword>
<keyword id="KW-1133">Transmembrane helix</keyword>
<keyword id="KW-0813">Transport</keyword>
<sequence length="823" mass="93584">MGKNSLKRALELDVVDFAEHTSAHGIPRAYVSTGWRRYMWLLCFLFCLSCFGHQAYLIVERFNRNDIIVGVEIKFEEIKFPAVTICNMNPYKNSAARELGAIRNAIEAFELAIDKSDGNAHSKRKKRSANSKMVPIDLLCKEEHGMFTAHDYGHVECTCVTFEDMSKVGDTDDDEIFWNCHQRKDWTHKICHLAEGSNQLKTCKCFEDTCVSDEVTKQLVWPLQLSKNGTKLCISPESSGPRYCASAQKFQVSTCSNCDWLGKCEESDDMDLEEEIDSKTCICHHGNCFQIKGNVKKRKRRTPERKVHERLLSRYEGLLAVYSHCNCTKQHGCVSTSVPDMDLENSNKTCLCFYNKKNEQIWPCYKEPEWEERKCSRCNTMGDCVYSDKPKKQTISCLCATPIKMCVRIDPPQTNDTSLDDRVVKFWDIQPSTTMSPIVKKKEERDKAYGYTGVKDRIALRAKAMENMIFAVDALTEEEKWKISYNKSDFIMKCSFNGRECNVKHDFVEYLDPTYGACFTYGQKLGNNTNERSGPAYGLRLEVFVNVTEYLPTTEAAGVRLTVHATDEQPFPDTLGFSAPTGFVSSFGIKLKSMVRLPAPYGDCVREGKTEDFIYTQKAYNTEGCQRSCIQKHLSKTCGCGDPRFPPYRESKNCPVDDPYKRECIKNEMHVATRDSKKLGCSCKQPCNQDVYSVSYSASRWPAIAGDLSGCPLGMAAHHCLNYKREQGSMIEVYFEQLNYESLLESEAYGWSNLLSDFGGQLGLWMGVSVITIGEVACFFFEVFISLISSNRTKRRPARKSFSSSLRCSTDYNLNKDGFNLDN</sequence>
<feature type="chain" id="PRO_0000181315" description="Degenerin-like protein asic-1">
    <location>
        <begin position="1"/>
        <end position="823"/>
    </location>
</feature>
<feature type="topological domain" description="Cytoplasmic" evidence="4">
    <location>
        <begin position="1"/>
        <end position="38"/>
    </location>
</feature>
<feature type="transmembrane region" description="Helical" evidence="4">
    <location>
        <begin position="39"/>
        <end position="59"/>
    </location>
</feature>
<feature type="topological domain" description="Extracellular" evidence="4">
    <location>
        <begin position="60"/>
        <end position="767"/>
    </location>
</feature>
<feature type="transmembrane region" description="Helical" evidence="4">
    <location>
        <begin position="768"/>
        <end position="788"/>
    </location>
</feature>
<feature type="topological domain" description="Cytoplasmic" evidence="4">
    <location>
        <begin position="789"/>
        <end position="795"/>
    </location>
</feature>
<feature type="short sequence motif" description="GAS motif; ion selectivity filter" evidence="2">
    <location>
        <begin position="767"/>
        <end position="769"/>
    </location>
</feature>
<feature type="glycosylation site" description="N-linked (GlcNAc...) asparagine" evidence="4">
    <location>
        <position position="228"/>
    </location>
</feature>
<feature type="glycosylation site" description="N-linked (GlcNAc...) asparagine" evidence="4">
    <location>
        <position position="326"/>
    </location>
</feature>
<feature type="glycosylation site" description="N-linked (GlcNAc...) asparagine" evidence="4">
    <location>
        <position position="347"/>
    </location>
</feature>
<feature type="glycosylation site" description="N-linked (GlcNAc...) asparagine" evidence="4">
    <location>
        <position position="415"/>
    </location>
</feature>
<feature type="glycosylation site" description="N-linked (GlcNAc...) asparagine" evidence="4">
    <location>
        <position position="486"/>
    </location>
</feature>
<feature type="glycosylation site" description="N-linked (GlcNAc...) asparagine" evidence="4">
    <location>
        <position position="527"/>
    </location>
</feature>
<feature type="glycosylation site" description="N-linked (GlcNAc...) asparagine" evidence="4">
    <location>
        <position position="546"/>
    </location>
</feature>
<feature type="disulfide bond" evidence="2">
    <location>
        <begin position="86"/>
        <end position="518"/>
    </location>
</feature>
<feature type="disulfide bond" evidence="2">
    <location>
        <begin position="494"/>
        <end position="501"/>
    </location>
</feature>
<feature type="disulfide bond" evidence="2">
    <location>
        <begin position="604"/>
        <end position="687"/>
    </location>
</feature>
<feature type="disulfide bond" evidence="2">
    <location>
        <begin position="625"/>
        <end position="683"/>
    </location>
</feature>
<feature type="disulfide bond" evidence="2">
    <location>
        <begin position="629"/>
        <end position="681"/>
    </location>
</feature>
<feature type="disulfide bond" evidence="2">
    <location>
        <begin position="638"/>
        <end position="664"/>
    </location>
</feature>
<dbReference type="EMBL" id="BX284601">
    <property type="protein sequence ID" value="CCD66427.1"/>
    <property type="molecule type" value="Genomic_DNA"/>
</dbReference>
<dbReference type="PIR" id="T34468">
    <property type="entry name" value="T34468"/>
</dbReference>
<dbReference type="RefSeq" id="NP_491214.3">
    <property type="nucleotide sequence ID" value="NM_058813.5"/>
</dbReference>
<dbReference type="SMR" id="O01635"/>
<dbReference type="BioGRID" id="55958">
    <property type="interactions" value="2"/>
</dbReference>
<dbReference type="FunCoup" id="O01635">
    <property type="interactions" value="65"/>
</dbReference>
<dbReference type="STRING" id="6239.ZK770.1.1"/>
<dbReference type="GlyCosmos" id="O01635">
    <property type="glycosylation" value="7 sites, No reported glycans"/>
</dbReference>
<dbReference type="PaxDb" id="6239-ZK770.1"/>
<dbReference type="PeptideAtlas" id="O01635"/>
<dbReference type="EnsemblMetazoa" id="ZK770.1.1">
    <property type="protein sequence ID" value="ZK770.1.1"/>
    <property type="gene ID" value="WBGene00022815"/>
</dbReference>
<dbReference type="GeneID" id="191422"/>
<dbReference type="KEGG" id="cel:CELE_ZK770.1"/>
<dbReference type="UCSC" id="ZK770.1">
    <property type="organism name" value="c. elegans"/>
</dbReference>
<dbReference type="AGR" id="WB:WBGene00022815"/>
<dbReference type="CTD" id="191422"/>
<dbReference type="WormBase" id="ZK770.1">
    <property type="protein sequence ID" value="CE45595"/>
    <property type="gene ID" value="WBGene00022815"/>
    <property type="gene designation" value="asic-1"/>
</dbReference>
<dbReference type="eggNOG" id="KOG4294">
    <property type="taxonomic scope" value="Eukaryota"/>
</dbReference>
<dbReference type="HOGENOM" id="CLU_017673_0_0_1"/>
<dbReference type="InParanoid" id="O01635"/>
<dbReference type="OMA" id="AMENIIF"/>
<dbReference type="OrthoDB" id="6021021at2759"/>
<dbReference type="PhylomeDB" id="O01635"/>
<dbReference type="Reactome" id="R-CEL-2672351">
    <property type="pathway name" value="Stimuli-sensing channels"/>
</dbReference>
<dbReference type="Reactome" id="R-CEL-9730628">
    <property type="pathway name" value="Sensory perception of salty taste"/>
</dbReference>
<dbReference type="PRO" id="PR:O01635"/>
<dbReference type="Proteomes" id="UP000001940">
    <property type="component" value="Chromosome I"/>
</dbReference>
<dbReference type="Bgee" id="WBGene00022815">
    <property type="expression patterns" value="Expressed in larva and 1 other cell type or tissue"/>
</dbReference>
<dbReference type="GO" id="GO:0030425">
    <property type="term" value="C:dendrite"/>
    <property type="evidence" value="ECO:0007669"/>
    <property type="project" value="UniProtKB-SubCell"/>
</dbReference>
<dbReference type="GO" id="GO:0005886">
    <property type="term" value="C:plasma membrane"/>
    <property type="evidence" value="ECO:0000250"/>
    <property type="project" value="UniProtKB"/>
</dbReference>
<dbReference type="GO" id="GO:0045211">
    <property type="term" value="C:postsynaptic membrane"/>
    <property type="evidence" value="ECO:0007669"/>
    <property type="project" value="UniProtKB-SubCell"/>
</dbReference>
<dbReference type="GO" id="GO:0015280">
    <property type="term" value="F:ligand-gated sodium channel activity"/>
    <property type="evidence" value="ECO:0000318"/>
    <property type="project" value="GO_Central"/>
</dbReference>
<dbReference type="GO" id="GO:0160128">
    <property type="term" value="F:pH-gated monoatomic ion channel activity"/>
    <property type="evidence" value="ECO:0000250"/>
    <property type="project" value="UniProtKB"/>
</dbReference>
<dbReference type="GO" id="GO:0071467">
    <property type="term" value="P:cellular response to pH"/>
    <property type="evidence" value="ECO:0000250"/>
    <property type="project" value="UniProtKB"/>
</dbReference>
<dbReference type="GO" id="GO:0033603">
    <property type="term" value="P:positive regulation of dopamine secretion"/>
    <property type="evidence" value="ECO:0000315"/>
    <property type="project" value="UniProtKB"/>
</dbReference>
<dbReference type="GO" id="GO:0035725">
    <property type="term" value="P:sodium ion transmembrane transport"/>
    <property type="evidence" value="ECO:0000250"/>
    <property type="project" value="UniProtKB"/>
</dbReference>
<dbReference type="FunFam" id="1.10.287.770:FF:000001">
    <property type="entry name" value="Acid-sensing ion channel subunit 1"/>
    <property type="match status" value="1"/>
</dbReference>
<dbReference type="Gene3D" id="2.60.470.10">
    <property type="entry name" value="Acid-sensing ion channels like domains"/>
    <property type="match status" value="1"/>
</dbReference>
<dbReference type="Gene3D" id="1.10.287.770">
    <property type="entry name" value="YojJ-like"/>
    <property type="match status" value="1"/>
</dbReference>
<dbReference type="InterPro" id="IPR004726">
    <property type="entry name" value="Deg-1"/>
</dbReference>
<dbReference type="InterPro" id="IPR001873">
    <property type="entry name" value="ENaC"/>
</dbReference>
<dbReference type="InterPro" id="IPR020903">
    <property type="entry name" value="ENaC_CS"/>
</dbReference>
<dbReference type="NCBIfam" id="TIGR00867">
    <property type="entry name" value="deg-1"/>
    <property type="match status" value="1"/>
</dbReference>
<dbReference type="PANTHER" id="PTHR11690">
    <property type="entry name" value="AMILORIDE-SENSITIVE SODIUM CHANNEL-RELATED"/>
    <property type="match status" value="1"/>
</dbReference>
<dbReference type="PANTHER" id="PTHR11690:SF282">
    <property type="entry name" value="DEGENERIN-LIKE PROTEIN ASIC-1"/>
    <property type="match status" value="1"/>
</dbReference>
<dbReference type="Pfam" id="PF00858">
    <property type="entry name" value="ASC"/>
    <property type="match status" value="2"/>
</dbReference>
<dbReference type="PRINTS" id="PR01078">
    <property type="entry name" value="AMINACHANNEL"/>
</dbReference>
<dbReference type="PROSITE" id="PS01206">
    <property type="entry name" value="ASC"/>
    <property type="match status" value="1"/>
</dbReference>
<organism>
    <name type="scientific">Caenorhabditis elegans</name>
    <dbReference type="NCBI Taxonomy" id="6239"/>
    <lineage>
        <taxon>Eukaryota</taxon>
        <taxon>Metazoa</taxon>
        <taxon>Ecdysozoa</taxon>
        <taxon>Nematoda</taxon>
        <taxon>Chromadorea</taxon>
        <taxon>Rhabditida</taxon>
        <taxon>Rhabditina</taxon>
        <taxon>Rhabditomorpha</taxon>
        <taxon>Rhabditoidea</taxon>
        <taxon>Rhabditidae</taxon>
        <taxon>Peloderinae</taxon>
        <taxon>Caenorhabditis</taxon>
    </lineage>
</organism>
<gene>
    <name evidence="7" type="primary">asic-1</name>
    <name evidence="7" type="ORF">ZK770.1</name>
</gene>
<reference key="1">
    <citation type="journal article" date="1998" name="Science">
        <title>Genome sequence of the nematode C. elegans: a platform for investigating biology.</title>
        <authorList>
            <consortium name="The C. elegans sequencing consortium"/>
        </authorList>
    </citation>
    <scope>NUCLEOTIDE SEQUENCE [LARGE SCALE GENOMIC DNA]</scope>
    <source>
        <strain>Bristol N2</strain>
    </source>
</reference>
<reference key="2">
    <citation type="journal article" date="2020" name="Synapse">
        <title>Synaptic vesicle fusion is modulated through feedback inhibition by dopamine auto-receptors.</title>
        <authorList>
            <person name="Formisano R."/>
            <person name="Mersha M.D."/>
            <person name="Caplan J."/>
            <person name="Singh A."/>
            <person name="Rankin C.H."/>
            <person name="Tavernarakis N."/>
            <person name="Dhillon H.S."/>
        </authorList>
    </citation>
    <scope>FUNCTION</scope>
</reference>
<evidence type="ECO:0000250" key="1">
    <source>
        <dbReference type="UniProtKB" id="P78348"/>
    </source>
</evidence>
<evidence type="ECO:0000250" key="2">
    <source>
        <dbReference type="UniProtKB" id="Q1XA76"/>
    </source>
</evidence>
<evidence type="ECO:0000250" key="3">
    <source>
        <dbReference type="UniProtKB" id="Q6NXK8"/>
    </source>
</evidence>
<evidence type="ECO:0000255" key="4"/>
<evidence type="ECO:0000269" key="5">
    <source>
    </source>
</evidence>
<evidence type="ECO:0000305" key="6"/>
<evidence type="ECO:0000312" key="7">
    <source>
        <dbReference type="WormBase" id="ZK770.1"/>
    </source>
</evidence>
<accession>O01635</accession>